<accession>P31160</accession>
<accession>Q31L24</accession>
<evidence type="ECO:0000255" key="1">
    <source>
        <dbReference type="HAMAP-Rule" id="MF_01341"/>
    </source>
</evidence>
<evidence type="ECO:0000256" key="2">
    <source>
        <dbReference type="SAM" id="MobiDB-lite"/>
    </source>
</evidence>
<evidence type="ECO:0000305" key="3"/>
<organism>
    <name type="scientific">Synechococcus elongatus (strain ATCC 33912 / PCC 7942 / FACHB-805)</name>
    <name type="common">Anacystis nidulans R2</name>
    <dbReference type="NCBI Taxonomy" id="1140"/>
    <lineage>
        <taxon>Bacteria</taxon>
        <taxon>Bacillati</taxon>
        <taxon>Cyanobacteriota</taxon>
        <taxon>Cyanophyceae</taxon>
        <taxon>Synechococcales</taxon>
        <taxon>Synechococcaceae</taxon>
        <taxon>Synechococcus</taxon>
    </lineage>
</organism>
<proteinExistence type="inferred from homology"/>
<feature type="chain" id="PRO_0000104838" description="Large ribosomal subunit protein uL15">
    <location>
        <begin position="1"/>
        <end position="147"/>
    </location>
</feature>
<feature type="region of interest" description="Disordered" evidence="2">
    <location>
        <begin position="1"/>
        <end position="55"/>
    </location>
</feature>
<feature type="compositionally biased region" description="Gly residues" evidence="2">
    <location>
        <begin position="23"/>
        <end position="35"/>
    </location>
</feature>
<keyword id="KW-1185">Reference proteome</keyword>
<keyword id="KW-0687">Ribonucleoprotein</keyword>
<keyword id="KW-0689">Ribosomal protein</keyword>
<keyword id="KW-0694">RNA-binding</keyword>
<keyword id="KW-0699">rRNA-binding</keyword>
<gene>
    <name evidence="1" type="primary">rplO</name>
    <name type="synonym">rpl15</name>
    <name type="ordered locus">Synpcc7942_2215</name>
</gene>
<sequence>MKLDNLAPQPGAKKRKRRVGRGIAAGQGASCGFGMRGQKSRSGRPTRPGFEGGQMPLYRRVPKLKHFPLINRKFYTVVNVGALAGLAAGTEVTLESLMAVGIVTQNDGPLKILGDGELSVSLSVSAAAFTATAQQKIEAAGGSIALV</sequence>
<name>RL15_SYNE7</name>
<comment type="function">
    <text evidence="1">Binds to the 23S rRNA.</text>
</comment>
<comment type="subunit">
    <text evidence="1">Part of the 50S ribosomal subunit.</text>
</comment>
<comment type="similarity">
    <text evidence="1">Belongs to the universal ribosomal protein uL15 family.</text>
</comment>
<dbReference type="EMBL" id="CP000100">
    <property type="protein sequence ID" value="ABB58245.1"/>
    <property type="molecule type" value="Genomic_DNA"/>
</dbReference>
<dbReference type="EMBL" id="X68056">
    <property type="protein sequence ID" value="CAA48193.1"/>
    <property type="molecule type" value="Genomic_DNA"/>
</dbReference>
<dbReference type="RefSeq" id="WP_011244192.1">
    <property type="nucleotide sequence ID" value="NZ_JACJTX010000001.1"/>
</dbReference>
<dbReference type="SMR" id="P31160"/>
<dbReference type="STRING" id="1140.Synpcc7942_2215"/>
<dbReference type="PaxDb" id="1140-Synpcc7942_2215"/>
<dbReference type="GeneID" id="72431098"/>
<dbReference type="KEGG" id="syf:Synpcc7942_2215"/>
<dbReference type="eggNOG" id="COG0200">
    <property type="taxonomic scope" value="Bacteria"/>
</dbReference>
<dbReference type="HOGENOM" id="CLU_055188_4_1_3"/>
<dbReference type="OrthoDB" id="9810293at2"/>
<dbReference type="BioCyc" id="SYNEL:SYNPCC7942_2215-MONOMER"/>
<dbReference type="Proteomes" id="UP000889800">
    <property type="component" value="Chromosome"/>
</dbReference>
<dbReference type="GO" id="GO:0022625">
    <property type="term" value="C:cytosolic large ribosomal subunit"/>
    <property type="evidence" value="ECO:0007669"/>
    <property type="project" value="TreeGrafter"/>
</dbReference>
<dbReference type="GO" id="GO:0019843">
    <property type="term" value="F:rRNA binding"/>
    <property type="evidence" value="ECO:0007669"/>
    <property type="project" value="UniProtKB-UniRule"/>
</dbReference>
<dbReference type="GO" id="GO:0003735">
    <property type="term" value="F:structural constituent of ribosome"/>
    <property type="evidence" value="ECO:0007669"/>
    <property type="project" value="InterPro"/>
</dbReference>
<dbReference type="GO" id="GO:0006412">
    <property type="term" value="P:translation"/>
    <property type="evidence" value="ECO:0007669"/>
    <property type="project" value="UniProtKB-UniRule"/>
</dbReference>
<dbReference type="Gene3D" id="3.100.10.10">
    <property type="match status" value="1"/>
</dbReference>
<dbReference type="HAMAP" id="MF_01341">
    <property type="entry name" value="Ribosomal_uL15"/>
    <property type="match status" value="1"/>
</dbReference>
<dbReference type="InterPro" id="IPR030878">
    <property type="entry name" value="Ribosomal_uL15"/>
</dbReference>
<dbReference type="InterPro" id="IPR021131">
    <property type="entry name" value="Ribosomal_uL15/eL18"/>
</dbReference>
<dbReference type="InterPro" id="IPR036227">
    <property type="entry name" value="Ribosomal_uL15/eL18_sf"/>
</dbReference>
<dbReference type="InterPro" id="IPR005749">
    <property type="entry name" value="Ribosomal_uL15_bac-type"/>
</dbReference>
<dbReference type="InterPro" id="IPR001196">
    <property type="entry name" value="Ribosomal_uL15_CS"/>
</dbReference>
<dbReference type="NCBIfam" id="TIGR01071">
    <property type="entry name" value="rplO_bact"/>
    <property type="match status" value="1"/>
</dbReference>
<dbReference type="PANTHER" id="PTHR12934">
    <property type="entry name" value="50S RIBOSOMAL PROTEIN L15"/>
    <property type="match status" value="1"/>
</dbReference>
<dbReference type="PANTHER" id="PTHR12934:SF11">
    <property type="entry name" value="LARGE RIBOSOMAL SUBUNIT PROTEIN UL15M"/>
    <property type="match status" value="1"/>
</dbReference>
<dbReference type="Pfam" id="PF00828">
    <property type="entry name" value="Ribosomal_L27A"/>
    <property type="match status" value="1"/>
</dbReference>
<dbReference type="SUPFAM" id="SSF52080">
    <property type="entry name" value="Ribosomal proteins L15p and L18e"/>
    <property type="match status" value="1"/>
</dbReference>
<dbReference type="PROSITE" id="PS00475">
    <property type="entry name" value="RIBOSOMAL_L15"/>
    <property type="match status" value="1"/>
</dbReference>
<protein>
    <recommendedName>
        <fullName evidence="1">Large ribosomal subunit protein uL15</fullName>
    </recommendedName>
    <alternativeName>
        <fullName evidence="3">50S ribosomal protein L15</fullName>
    </alternativeName>
</protein>
<reference key="1">
    <citation type="submission" date="2005-08" db="EMBL/GenBank/DDBJ databases">
        <title>Complete sequence of chromosome 1 of Synechococcus elongatus PCC 7942.</title>
        <authorList>
            <consortium name="US DOE Joint Genome Institute"/>
            <person name="Copeland A."/>
            <person name="Lucas S."/>
            <person name="Lapidus A."/>
            <person name="Barry K."/>
            <person name="Detter J.C."/>
            <person name="Glavina T."/>
            <person name="Hammon N."/>
            <person name="Israni S."/>
            <person name="Pitluck S."/>
            <person name="Schmutz J."/>
            <person name="Larimer F."/>
            <person name="Land M."/>
            <person name="Kyrpides N."/>
            <person name="Lykidis A."/>
            <person name="Golden S."/>
            <person name="Richardson P."/>
        </authorList>
    </citation>
    <scope>NUCLEOTIDE SEQUENCE [LARGE SCALE GENOMIC DNA]</scope>
    <source>
        <strain>ATCC 33912 / PCC 7942 / FACHB-805</strain>
    </source>
</reference>
<reference key="2">
    <citation type="journal article" date="1992" name="Biochim. Biophys. Acta">
        <title>Cloning and characterization of the secY gene from the cyanobacterium Synechococcus PCC7942.</title>
        <authorList>
            <person name="Nakai M."/>
            <person name="Tanaka A."/>
            <person name="Omata T."/>
            <person name="Endo T."/>
        </authorList>
    </citation>
    <scope>NUCLEOTIDE SEQUENCE [GENOMIC DNA] OF 113-147</scope>
</reference>